<protein>
    <recommendedName>
        <fullName evidence="1">Histidine--tRNA ligase</fullName>
        <ecNumber evidence="1">6.1.1.21</ecNumber>
    </recommendedName>
    <alternativeName>
        <fullName evidence="1">Histidyl-tRNA synthetase</fullName>
        <shortName evidence="1">HisRS</shortName>
    </alternativeName>
</protein>
<feature type="chain" id="PRO_1000095535" description="Histidine--tRNA ligase">
    <location>
        <begin position="1"/>
        <end position="446"/>
    </location>
</feature>
<reference key="1">
    <citation type="journal article" date="2011" name="J. Bacteriol.">
        <title>Complete genome sequence of the plant growth-promoting endophyte Burkholderia phytofirmans strain PsJN.</title>
        <authorList>
            <person name="Weilharter A."/>
            <person name="Mitter B."/>
            <person name="Shin M.V."/>
            <person name="Chain P.S."/>
            <person name="Nowak J."/>
            <person name="Sessitsch A."/>
        </authorList>
    </citation>
    <scope>NUCLEOTIDE SEQUENCE [LARGE SCALE GENOMIC DNA]</scope>
    <source>
        <strain>DSM 17436 / LMG 22146 / PsJN</strain>
    </source>
</reference>
<accession>B2SXS9</accession>
<organism>
    <name type="scientific">Paraburkholderia phytofirmans (strain DSM 17436 / LMG 22146 / PsJN)</name>
    <name type="common">Burkholderia phytofirmans</name>
    <dbReference type="NCBI Taxonomy" id="398527"/>
    <lineage>
        <taxon>Bacteria</taxon>
        <taxon>Pseudomonadati</taxon>
        <taxon>Pseudomonadota</taxon>
        <taxon>Betaproteobacteria</taxon>
        <taxon>Burkholderiales</taxon>
        <taxon>Burkholderiaceae</taxon>
        <taxon>Paraburkholderia</taxon>
    </lineage>
</organism>
<proteinExistence type="inferred from homology"/>
<name>SYH_PARPJ</name>
<dbReference type="EC" id="6.1.1.21" evidence="1"/>
<dbReference type="EMBL" id="CP001052">
    <property type="protein sequence ID" value="ACD16935.1"/>
    <property type="molecule type" value="Genomic_DNA"/>
</dbReference>
<dbReference type="RefSeq" id="WP_012433529.1">
    <property type="nucleotide sequence ID" value="NC_010681.1"/>
</dbReference>
<dbReference type="SMR" id="B2SXS9"/>
<dbReference type="STRING" id="398527.Bphyt_2540"/>
<dbReference type="KEGG" id="bpy:Bphyt_2540"/>
<dbReference type="eggNOG" id="COG0124">
    <property type="taxonomic scope" value="Bacteria"/>
</dbReference>
<dbReference type="HOGENOM" id="CLU_025113_1_1_4"/>
<dbReference type="OrthoDB" id="9800814at2"/>
<dbReference type="Proteomes" id="UP000001739">
    <property type="component" value="Chromosome 1"/>
</dbReference>
<dbReference type="GO" id="GO:0005737">
    <property type="term" value="C:cytoplasm"/>
    <property type="evidence" value="ECO:0007669"/>
    <property type="project" value="UniProtKB-SubCell"/>
</dbReference>
<dbReference type="GO" id="GO:0005524">
    <property type="term" value="F:ATP binding"/>
    <property type="evidence" value="ECO:0007669"/>
    <property type="project" value="UniProtKB-UniRule"/>
</dbReference>
<dbReference type="GO" id="GO:0004821">
    <property type="term" value="F:histidine-tRNA ligase activity"/>
    <property type="evidence" value="ECO:0007669"/>
    <property type="project" value="UniProtKB-UniRule"/>
</dbReference>
<dbReference type="GO" id="GO:0006427">
    <property type="term" value="P:histidyl-tRNA aminoacylation"/>
    <property type="evidence" value="ECO:0007669"/>
    <property type="project" value="UniProtKB-UniRule"/>
</dbReference>
<dbReference type="CDD" id="cd00773">
    <property type="entry name" value="HisRS-like_core"/>
    <property type="match status" value="1"/>
</dbReference>
<dbReference type="CDD" id="cd00859">
    <property type="entry name" value="HisRS_anticodon"/>
    <property type="match status" value="1"/>
</dbReference>
<dbReference type="FunFam" id="3.30.930.10:FF:000005">
    <property type="entry name" value="Histidine--tRNA ligase"/>
    <property type="match status" value="1"/>
</dbReference>
<dbReference type="Gene3D" id="3.40.50.800">
    <property type="entry name" value="Anticodon-binding domain"/>
    <property type="match status" value="1"/>
</dbReference>
<dbReference type="Gene3D" id="3.30.930.10">
    <property type="entry name" value="Bira Bifunctional Protein, Domain 2"/>
    <property type="match status" value="1"/>
</dbReference>
<dbReference type="HAMAP" id="MF_00127">
    <property type="entry name" value="His_tRNA_synth"/>
    <property type="match status" value="1"/>
</dbReference>
<dbReference type="InterPro" id="IPR006195">
    <property type="entry name" value="aa-tRNA-synth_II"/>
</dbReference>
<dbReference type="InterPro" id="IPR045864">
    <property type="entry name" value="aa-tRNA-synth_II/BPL/LPL"/>
</dbReference>
<dbReference type="InterPro" id="IPR004154">
    <property type="entry name" value="Anticodon-bd"/>
</dbReference>
<dbReference type="InterPro" id="IPR036621">
    <property type="entry name" value="Anticodon-bd_dom_sf"/>
</dbReference>
<dbReference type="InterPro" id="IPR015807">
    <property type="entry name" value="His-tRNA-ligase"/>
</dbReference>
<dbReference type="InterPro" id="IPR041715">
    <property type="entry name" value="HisRS-like_core"/>
</dbReference>
<dbReference type="InterPro" id="IPR004516">
    <property type="entry name" value="HisRS/HisZ"/>
</dbReference>
<dbReference type="InterPro" id="IPR033656">
    <property type="entry name" value="HisRS_anticodon"/>
</dbReference>
<dbReference type="NCBIfam" id="TIGR00442">
    <property type="entry name" value="hisS"/>
    <property type="match status" value="1"/>
</dbReference>
<dbReference type="PANTHER" id="PTHR43707:SF1">
    <property type="entry name" value="HISTIDINE--TRNA LIGASE, MITOCHONDRIAL-RELATED"/>
    <property type="match status" value="1"/>
</dbReference>
<dbReference type="PANTHER" id="PTHR43707">
    <property type="entry name" value="HISTIDYL-TRNA SYNTHETASE"/>
    <property type="match status" value="1"/>
</dbReference>
<dbReference type="Pfam" id="PF03129">
    <property type="entry name" value="HGTP_anticodon"/>
    <property type="match status" value="1"/>
</dbReference>
<dbReference type="Pfam" id="PF13393">
    <property type="entry name" value="tRNA-synt_His"/>
    <property type="match status" value="1"/>
</dbReference>
<dbReference type="PIRSF" id="PIRSF001549">
    <property type="entry name" value="His-tRNA_synth"/>
    <property type="match status" value="1"/>
</dbReference>
<dbReference type="SUPFAM" id="SSF52954">
    <property type="entry name" value="Class II aaRS ABD-related"/>
    <property type="match status" value="1"/>
</dbReference>
<dbReference type="SUPFAM" id="SSF55681">
    <property type="entry name" value="Class II aaRS and biotin synthetases"/>
    <property type="match status" value="1"/>
</dbReference>
<dbReference type="PROSITE" id="PS50862">
    <property type="entry name" value="AA_TRNA_LIGASE_II"/>
    <property type="match status" value="1"/>
</dbReference>
<keyword id="KW-0030">Aminoacyl-tRNA synthetase</keyword>
<keyword id="KW-0067">ATP-binding</keyword>
<keyword id="KW-0963">Cytoplasm</keyword>
<keyword id="KW-0436">Ligase</keyword>
<keyword id="KW-0547">Nucleotide-binding</keyword>
<keyword id="KW-0648">Protein biosynthesis</keyword>
<comment type="catalytic activity">
    <reaction evidence="1">
        <text>tRNA(His) + L-histidine + ATP = L-histidyl-tRNA(His) + AMP + diphosphate + H(+)</text>
        <dbReference type="Rhea" id="RHEA:17313"/>
        <dbReference type="Rhea" id="RHEA-COMP:9665"/>
        <dbReference type="Rhea" id="RHEA-COMP:9689"/>
        <dbReference type="ChEBI" id="CHEBI:15378"/>
        <dbReference type="ChEBI" id="CHEBI:30616"/>
        <dbReference type="ChEBI" id="CHEBI:33019"/>
        <dbReference type="ChEBI" id="CHEBI:57595"/>
        <dbReference type="ChEBI" id="CHEBI:78442"/>
        <dbReference type="ChEBI" id="CHEBI:78527"/>
        <dbReference type="ChEBI" id="CHEBI:456215"/>
        <dbReference type="EC" id="6.1.1.21"/>
    </reaction>
</comment>
<comment type="subunit">
    <text evidence="1">Homodimer.</text>
</comment>
<comment type="subcellular location">
    <subcellularLocation>
        <location evidence="1">Cytoplasm</location>
    </subcellularLocation>
</comment>
<comment type="similarity">
    <text evidence="1">Belongs to the class-II aminoacyl-tRNA synthetase family.</text>
</comment>
<gene>
    <name evidence="1" type="primary">hisS</name>
    <name type="ordered locus">Bphyt_2540</name>
</gene>
<sequence length="446" mass="49828">MTEQKKKLEKLSGVKGMNDILPQEAGLWEFFETTVKSMLRSYGYQNIRTPIVEHTQLFKRGIGEVTDIVEKEMYSFTDALNGENLTMRPENTAAVVRAAIEHNMLYDGPKRLWYIGPMFRHERPQRGRYRQFHQVGVEALGFAGPDADAEIIMMCQRLWDDLGLMGIKLEINSLGLAEERAAHRVELIAHLEKHMDVLDEEAKRRLYTNPLRVLDTKNPAMQEVAQNAPKLIDFLGEESRAHFEGLQRILKANNIPFTINPRLVRGLDYYNLTVFEWVTDKLGAQGTVAAGGRYDPLIEQLGGKPTAACGWAMGIERILELLKEEQLVPEDEGCDVYVVHQGDAAREQAFIIAERLRDTGLDVILHCSADGQTASFKSQMKRADASGAAFAVVLGEDEIANGTVGVKPLRDTNANGGKNEQQNVPAEDLTEFLINAMVATAEDGDD</sequence>
<evidence type="ECO:0000255" key="1">
    <source>
        <dbReference type="HAMAP-Rule" id="MF_00127"/>
    </source>
</evidence>